<reference key="1">
    <citation type="journal article" date="2003" name="DNA Res.">
        <title>Prediction of the coding sequences of mouse homologues of KIAA gene: III. The complete nucleotide sequences of 500 mouse KIAA-homologous cDNAs identified by screening of terminal sequences of cDNA clones randomly sampled from size-fractionated libraries.</title>
        <authorList>
            <person name="Okazaki N."/>
            <person name="Kikuno R."/>
            <person name="Ohara R."/>
            <person name="Inamoto S."/>
            <person name="Koseki H."/>
            <person name="Hiraoka S."/>
            <person name="Saga Y."/>
            <person name="Nagase T."/>
            <person name="Ohara O."/>
            <person name="Koga H."/>
        </authorList>
    </citation>
    <scope>NUCLEOTIDE SEQUENCE [LARGE SCALE MRNA]</scope>
    <source>
        <tissue>Embryonic tail</tissue>
    </source>
</reference>
<reference key="2">
    <citation type="journal article" date="2004" name="Genome Res.">
        <title>The status, quality, and expansion of the NIH full-length cDNA project: the Mammalian Gene Collection (MGC).</title>
        <authorList>
            <consortium name="The MGC Project Team"/>
        </authorList>
    </citation>
    <scope>NUCLEOTIDE SEQUENCE [LARGE SCALE MRNA]</scope>
    <source>
        <strain>C57BL/6J</strain>
        <strain>FVB/N</strain>
        <tissue>Embryonic brain</tissue>
        <tissue>Eye</tissue>
        <tissue>Mammary tumor</tissue>
    </source>
</reference>
<reference key="3">
    <citation type="journal article" date="2005" name="Science">
        <title>The transcriptional landscape of the mammalian genome.</title>
        <authorList>
            <person name="Carninci P."/>
            <person name="Kasukawa T."/>
            <person name="Katayama S."/>
            <person name="Gough J."/>
            <person name="Frith M.C."/>
            <person name="Maeda N."/>
            <person name="Oyama R."/>
            <person name="Ravasi T."/>
            <person name="Lenhard B."/>
            <person name="Wells C."/>
            <person name="Kodzius R."/>
            <person name="Shimokawa K."/>
            <person name="Bajic V.B."/>
            <person name="Brenner S.E."/>
            <person name="Batalov S."/>
            <person name="Forrest A.R."/>
            <person name="Zavolan M."/>
            <person name="Davis M.J."/>
            <person name="Wilming L.G."/>
            <person name="Aidinis V."/>
            <person name="Allen J.E."/>
            <person name="Ambesi-Impiombato A."/>
            <person name="Apweiler R."/>
            <person name="Aturaliya R.N."/>
            <person name="Bailey T.L."/>
            <person name="Bansal M."/>
            <person name="Baxter L."/>
            <person name="Beisel K.W."/>
            <person name="Bersano T."/>
            <person name="Bono H."/>
            <person name="Chalk A.M."/>
            <person name="Chiu K.P."/>
            <person name="Choudhary V."/>
            <person name="Christoffels A."/>
            <person name="Clutterbuck D.R."/>
            <person name="Crowe M.L."/>
            <person name="Dalla E."/>
            <person name="Dalrymple B.P."/>
            <person name="de Bono B."/>
            <person name="Della Gatta G."/>
            <person name="di Bernardo D."/>
            <person name="Down T."/>
            <person name="Engstrom P."/>
            <person name="Fagiolini M."/>
            <person name="Faulkner G."/>
            <person name="Fletcher C.F."/>
            <person name="Fukushima T."/>
            <person name="Furuno M."/>
            <person name="Futaki S."/>
            <person name="Gariboldi M."/>
            <person name="Georgii-Hemming P."/>
            <person name="Gingeras T.R."/>
            <person name="Gojobori T."/>
            <person name="Green R.E."/>
            <person name="Gustincich S."/>
            <person name="Harbers M."/>
            <person name="Hayashi Y."/>
            <person name="Hensch T.K."/>
            <person name="Hirokawa N."/>
            <person name="Hill D."/>
            <person name="Huminiecki L."/>
            <person name="Iacono M."/>
            <person name="Ikeo K."/>
            <person name="Iwama A."/>
            <person name="Ishikawa T."/>
            <person name="Jakt M."/>
            <person name="Kanapin A."/>
            <person name="Katoh M."/>
            <person name="Kawasawa Y."/>
            <person name="Kelso J."/>
            <person name="Kitamura H."/>
            <person name="Kitano H."/>
            <person name="Kollias G."/>
            <person name="Krishnan S.P."/>
            <person name="Kruger A."/>
            <person name="Kummerfeld S.K."/>
            <person name="Kurochkin I.V."/>
            <person name="Lareau L.F."/>
            <person name="Lazarevic D."/>
            <person name="Lipovich L."/>
            <person name="Liu J."/>
            <person name="Liuni S."/>
            <person name="McWilliam S."/>
            <person name="Madan Babu M."/>
            <person name="Madera M."/>
            <person name="Marchionni L."/>
            <person name="Matsuda H."/>
            <person name="Matsuzawa S."/>
            <person name="Miki H."/>
            <person name="Mignone F."/>
            <person name="Miyake S."/>
            <person name="Morris K."/>
            <person name="Mottagui-Tabar S."/>
            <person name="Mulder N."/>
            <person name="Nakano N."/>
            <person name="Nakauchi H."/>
            <person name="Ng P."/>
            <person name="Nilsson R."/>
            <person name="Nishiguchi S."/>
            <person name="Nishikawa S."/>
            <person name="Nori F."/>
            <person name="Ohara O."/>
            <person name="Okazaki Y."/>
            <person name="Orlando V."/>
            <person name="Pang K.C."/>
            <person name="Pavan W.J."/>
            <person name="Pavesi G."/>
            <person name="Pesole G."/>
            <person name="Petrovsky N."/>
            <person name="Piazza S."/>
            <person name="Reed J."/>
            <person name="Reid J.F."/>
            <person name="Ring B.Z."/>
            <person name="Ringwald M."/>
            <person name="Rost B."/>
            <person name="Ruan Y."/>
            <person name="Salzberg S.L."/>
            <person name="Sandelin A."/>
            <person name="Schneider C."/>
            <person name="Schoenbach C."/>
            <person name="Sekiguchi K."/>
            <person name="Semple C.A."/>
            <person name="Seno S."/>
            <person name="Sessa L."/>
            <person name="Sheng Y."/>
            <person name="Shibata Y."/>
            <person name="Shimada H."/>
            <person name="Shimada K."/>
            <person name="Silva D."/>
            <person name="Sinclair B."/>
            <person name="Sperling S."/>
            <person name="Stupka E."/>
            <person name="Sugiura K."/>
            <person name="Sultana R."/>
            <person name="Takenaka Y."/>
            <person name="Taki K."/>
            <person name="Tammoja K."/>
            <person name="Tan S.L."/>
            <person name="Tang S."/>
            <person name="Taylor M.S."/>
            <person name="Tegner J."/>
            <person name="Teichmann S.A."/>
            <person name="Ueda H.R."/>
            <person name="van Nimwegen E."/>
            <person name="Verardo R."/>
            <person name="Wei C.L."/>
            <person name="Yagi K."/>
            <person name="Yamanishi H."/>
            <person name="Zabarovsky E."/>
            <person name="Zhu S."/>
            <person name="Zimmer A."/>
            <person name="Hide W."/>
            <person name="Bult C."/>
            <person name="Grimmond S.M."/>
            <person name="Teasdale R.D."/>
            <person name="Liu E.T."/>
            <person name="Brusic V."/>
            <person name="Quackenbush J."/>
            <person name="Wahlestedt C."/>
            <person name="Mattick J.S."/>
            <person name="Hume D.A."/>
            <person name="Kai C."/>
            <person name="Sasaki D."/>
            <person name="Tomaru Y."/>
            <person name="Fukuda S."/>
            <person name="Kanamori-Katayama M."/>
            <person name="Suzuki M."/>
            <person name="Aoki J."/>
            <person name="Arakawa T."/>
            <person name="Iida J."/>
            <person name="Imamura K."/>
            <person name="Itoh M."/>
            <person name="Kato T."/>
            <person name="Kawaji H."/>
            <person name="Kawagashira N."/>
            <person name="Kawashima T."/>
            <person name="Kojima M."/>
            <person name="Kondo S."/>
            <person name="Konno H."/>
            <person name="Nakano K."/>
            <person name="Ninomiya N."/>
            <person name="Nishio T."/>
            <person name="Okada M."/>
            <person name="Plessy C."/>
            <person name="Shibata K."/>
            <person name="Shiraki T."/>
            <person name="Suzuki S."/>
            <person name="Tagami M."/>
            <person name="Waki K."/>
            <person name="Watahiki A."/>
            <person name="Okamura-Oho Y."/>
            <person name="Suzuki H."/>
            <person name="Kawai J."/>
            <person name="Hayashizaki Y."/>
        </authorList>
    </citation>
    <scope>NUCLEOTIDE SEQUENCE [LARGE SCALE MRNA] OF 1-1438</scope>
    <scope>NUCLEOTIDE SEQUENCE [LARGE SCALE MRNA] OF 1568-1862</scope>
    <source>
        <strain>C57BL/6J</strain>
        <tissue>Embryo</tissue>
        <tissue>Embryonic spinal cord</tissue>
        <tissue>Embryonic testis</tissue>
        <tissue>Melanocyte</tissue>
    </source>
</reference>
<reference key="4">
    <citation type="journal article" date="1999" name="Nat. Med.">
        <title>Regulation of Fas ligand expression and cell death by apoptosis-linked gene 4.</title>
        <authorList>
            <person name="Lacana' E."/>
            <person name="D'Adamio L."/>
        </authorList>
    </citation>
    <scope>NUCLEOTIDE SEQUENCE [MRNA] OF 394-1163</scope>
    <scope>TISSUE SPECIFICITY</scope>
</reference>
<reference key="5">
    <citation type="journal article" date="2010" name="Cell">
        <title>A tissue-specific atlas of mouse protein phosphorylation and expression.</title>
        <authorList>
            <person name="Huttlin E.L."/>
            <person name="Jedrychowski M.P."/>
            <person name="Elias J.E."/>
            <person name="Goswami T."/>
            <person name="Rad R."/>
            <person name="Beausoleil S.A."/>
            <person name="Villen J."/>
            <person name="Haas W."/>
            <person name="Sowa M.E."/>
            <person name="Gygi S.P."/>
        </authorList>
    </citation>
    <scope>PHOSPHORYLATION [LARGE SCALE ANALYSIS] AT SER-1468 AND SER-1490</scope>
    <scope>IDENTIFICATION BY MASS SPECTROMETRY [LARGE SCALE ANALYSIS]</scope>
    <source>
        <tissue>Brain</tissue>
        <tissue>Lung</tissue>
        <tissue>Pancreas</tissue>
        <tissue>Spleen</tissue>
    </source>
</reference>
<sequence>MANLEESFPRGGTRKLHKSEKSSQQVVEQDNLFDVSTEEGPIKRKKSQKGPAKTKKLKIEKRKSIKSIKEKFEILSLESLCEGMRILGCVKEVSELELVVSLPNGLQGFVQVTEVCDAYTQKLNEQVAQEEPLEDLLRLPELFSPGMLVRCVVSSLDVTESGKKSVKLSVNPKRVNKVLSADALRPGMLLTGTVSSLEDHGYLVDIGVGGTRAFLSLKKAQEYIRQKNKGAKFKVGQYLTCVVEEVKSNGGVVSLSVEHSEVSSAFATEEQSWNLNNLLPGLLVKAQVQKVTQFGLQLNFLTFFKGLVDFMHLEPKKMGSYSSNQTVKACILCVHPRTRVVRLSLRPIFLHPGRPLTRISYQQLGAVLDDVPVQGFFKNAGAIFRLKDGVLAYARVSHLSDSKKAFNAEAFKPGSTHKCRIIDYSQMDELALLSLRKSIIAAPFLRYHDIKIGTVVKGTVLAIKPFGILVKVGEQIKGLVPSMHLADIMMKNPEKKYSPGDEVKCRVLLCDPEAKKLIMTLKKTLVTSKLSLITCYEGAKPGLQTHGVIIRVKDYGCIVKFYNDVQGLVPKHELSTQHIPDPETVFYTGQVVKVAVLSCEPSKERMLLSFRLLSDSRPKDPGVESSQKKTGAVRIGQLVDVKVLEKTKTGLEVAILPHNTPAFLPTPHLSDHAANGPLLHHWLQTGDTLHRVLCLSQSERHILLCRKPALVSTVEGGQDPKSLSEIQPGMLLIGFVKCIKEYGVFVQFPSGLSGLSPKTIMSDKFVTTPSEHFVEGQTVVAKVTNVDESKQRMLLSLRLSDCSLGDSASTSFLLLCQCLEELQGIRSLMSNQDSVLIQTLADMTPGMVLDAVVHEVLEDGSVVFSSDPVPDLVLRASRYHRAGQEVEPGQKKKVVVLHVDMLKLEVHVSLHQDLVNRKTRKLRKSSRHQGIVQHLEESFAVASLVETGHLVAFSLISHLNDTFHFDSEKLRVGQGVCLTLKTTEPGVTGLILAVEGPASKRTRMPVQRDSETVDDKGEEKEEEEEEEEKEEENLTVKSKKRHSLAIGDKVTGTIKAVKATHVVVTLADGFVGCIHASRILDDVPVGTSPTTTLKAGKKVTARVIGGRDVKTSKFLPISHPRFVLTILELSVRPSELKGSYSALNTHSESPVEKIRQYQAGQTVTCFFKKYNVMKKWLEVDIGPDIRGRIPLLLTSLSFKVLKHPDKKFQVGQAIEATVVDPDVPRAFLCLSLIGPYRLEEGEVAMGRVMKVVPNRGLTVSFPFGKIGKVSMFHLSDSYSEAPLEDFCPQKIVRCYILSTAHRVLALSLRSSRTNRETKNRIEDPEINSIEDVKEGQLLRGYVKCVLPSSVIIGLGPSVLGLAKYSHVSECVPPEKELYNGCLPEGKLVTAKVLRVNPMKNLIELSLLPSDTGRPDVFSPAPEPKQEERSGGAEEGQKRKEKNQKRREEKEEPQKSQRGGRGKRERQESESEQELVNKRPKKSGAAEEDDSGVEVYYREGEDEVGEPKLPPRGKQTKSTEVPRLHLSSGFLWDVGLDSLTPALPLREESSDSEDEQPHQAKKKKGKKERELEKQKAEKELSRIEEALMDPGRQPESADDFDRLVLSSPNSSILWLQYMAFHLQATEIEKARAVAERALKTISFREEQEKLNVWVALLNLENMYGSQESLTKVFERAVQYNEPLKVFLHLADIYTKSEKYKEAGELYNRMLKRFRQEKAVWIKYGAFVLGRSQAGASHRVLQRALECLPAKEHVDVIVKFAQLEFQLGDVERAKAIFENTLSTYPKRTDVWSVYIDMTIKHGSQTAVRDIFERVIHLSLAPKRMKFFFKRYLDYEKQHGTEKDVQAVKAKALEYVEAKSSALED</sequence>
<dbReference type="EMBL" id="AK129080">
    <property type="protein sequence ID" value="BAC97890.1"/>
    <property type="status" value="ALT_INIT"/>
    <property type="molecule type" value="mRNA"/>
</dbReference>
<dbReference type="EMBL" id="BC038503">
    <property type="protein sequence ID" value="AAH38503.1"/>
    <property type="molecule type" value="mRNA"/>
</dbReference>
<dbReference type="EMBL" id="BC055276">
    <property type="protein sequence ID" value="AAH55276.3"/>
    <property type="molecule type" value="mRNA"/>
</dbReference>
<dbReference type="EMBL" id="BC070468">
    <property type="protein sequence ID" value="AAH70468.1"/>
    <property type="molecule type" value="mRNA"/>
</dbReference>
<dbReference type="EMBL" id="AK003899">
    <property type="protein sequence ID" value="BAB23064.2"/>
    <property type="status" value="ALT_INIT"/>
    <property type="molecule type" value="mRNA"/>
</dbReference>
<dbReference type="EMBL" id="AK141450">
    <property type="protein sequence ID" value="BAE24688.1"/>
    <property type="molecule type" value="mRNA"/>
</dbReference>
<dbReference type="EMBL" id="AK147950">
    <property type="protein sequence ID" value="BAE28246.1"/>
    <property type="molecule type" value="mRNA"/>
</dbReference>
<dbReference type="EMBL" id="AK161803">
    <property type="protein sequence ID" value="BAE36581.1"/>
    <property type="molecule type" value="mRNA"/>
</dbReference>
<dbReference type="EMBL" id="AF055668">
    <property type="protein sequence ID" value="AAD20941.1"/>
    <property type="status" value="ALT_SEQ"/>
    <property type="molecule type" value="mRNA"/>
</dbReference>
<dbReference type="EMBL" id="AF055669">
    <property type="protein sequence ID" value="AAD20942.1"/>
    <property type="molecule type" value="mRNA"/>
</dbReference>
<dbReference type="CCDS" id="CCDS29888.1"/>
<dbReference type="RefSeq" id="NP_035183.2">
    <property type="nucleotide sequence ID" value="NM_011053.2"/>
</dbReference>
<dbReference type="SMR" id="Q6NS46"/>
<dbReference type="BioGRID" id="202073">
    <property type="interactions" value="35"/>
</dbReference>
<dbReference type="FunCoup" id="Q6NS46">
    <property type="interactions" value="4610"/>
</dbReference>
<dbReference type="STRING" id="10090.ENSMUSP00000072008"/>
<dbReference type="GlyGen" id="Q6NS46">
    <property type="glycosylation" value="1 site, 1 O-linked glycan (1 site)"/>
</dbReference>
<dbReference type="iPTMnet" id="Q6NS46"/>
<dbReference type="PhosphoSitePlus" id="Q6NS46"/>
<dbReference type="SwissPalm" id="Q6NS46"/>
<dbReference type="jPOST" id="Q6NS46"/>
<dbReference type="PaxDb" id="10090-ENSMUSP00000072008"/>
<dbReference type="PeptideAtlas" id="Q6NS46"/>
<dbReference type="ProteomicsDB" id="299898"/>
<dbReference type="Pumba" id="Q6NS46"/>
<dbReference type="Antibodypedia" id="31534">
    <property type="antibodies" value="47 antibodies from 15 providers"/>
</dbReference>
<dbReference type="DNASU" id="18572"/>
<dbReference type="Ensembl" id="ENSMUST00000072141.4">
    <property type="protein sequence ID" value="ENSMUSP00000072008.3"/>
    <property type="gene ID" value="ENSMUSG00000025047.10"/>
</dbReference>
<dbReference type="GeneID" id="18572"/>
<dbReference type="KEGG" id="mmu:18572"/>
<dbReference type="UCSC" id="uc008hup.1">
    <property type="organism name" value="mouse"/>
</dbReference>
<dbReference type="AGR" id="MGI:1341788"/>
<dbReference type="CTD" id="22984"/>
<dbReference type="MGI" id="MGI:1341788">
    <property type="gene designation" value="Pdcd11"/>
</dbReference>
<dbReference type="VEuPathDB" id="HostDB:ENSMUSG00000025047"/>
<dbReference type="eggNOG" id="KOG1070">
    <property type="taxonomic scope" value="Eukaryota"/>
</dbReference>
<dbReference type="GeneTree" id="ENSGT00390000012228"/>
<dbReference type="HOGENOM" id="CLU_000845_1_1_1"/>
<dbReference type="InParanoid" id="Q6NS46"/>
<dbReference type="OMA" id="GQYLRAY"/>
<dbReference type="OrthoDB" id="412781at2759"/>
<dbReference type="PhylomeDB" id="Q6NS46"/>
<dbReference type="TreeFam" id="TF105697"/>
<dbReference type="Reactome" id="R-MMU-6791226">
    <property type="pathway name" value="Major pathway of rRNA processing in the nucleolus and cytosol"/>
</dbReference>
<dbReference type="BioGRID-ORCS" id="18572">
    <property type="hits" value="24 hits in 84 CRISPR screens"/>
</dbReference>
<dbReference type="ChiTaRS" id="Pdcd11">
    <property type="organism name" value="mouse"/>
</dbReference>
<dbReference type="PRO" id="PR:Q6NS46"/>
<dbReference type="Proteomes" id="UP000000589">
    <property type="component" value="Chromosome 19"/>
</dbReference>
<dbReference type="RNAct" id="Q6NS46">
    <property type="molecule type" value="protein"/>
</dbReference>
<dbReference type="Bgee" id="ENSMUSG00000025047">
    <property type="expression patterns" value="Expressed in cleaving embryo and 235 other cell types or tissues"/>
</dbReference>
<dbReference type="GO" id="GO:0005829">
    <property type="term" value="C:cytosol"/>
    <property type="evidence" value="ECO:0000314"/>
    <property type="project" value="MGI"/>
</dbReference>
<dbReference type="GO" id="GO:0005730">
    <property type="term" value="C:nucleolus"/>
    <property type="evidence" value="ECO:0007669"/>
    <property type="project" value="UniProtKB-SubCell"/>
</dbReference>
<dbReference type="GO" id="GO:0051059">
    <property type="term" value="F:NF-kappaB binding"/>
    <property type="evidence" value="ECO:0007669"/>
    <property type="project" value="Ensembl"/>
</dbReference>
<dbReference type="GO" id="GO:0003676">
    <property type="term" value="F:nucleic acid binding"/>
    <property type="evidence" value="ECO:0007669"/>
    <property type="project" value="InterPro"/>
</dbReference>
<dbReference type="GO" id="GO:0006364">
    <property type="term" value="P:rRNA processing"/>
    <property type="evidence" value="ECO:0007669"/>
    <property type="project" value="UniProtKB-KW"/>
</dbReference>
<dbReference type="CDD" id="cd05702">
    <property type="entry name" value="S1_Rrp5_repeat_hs11_sc8"/>
    <property type="match status" value="1"/>
</dbReference>
<dbReference type="CDD" id="cd05703">
    <property type="entry name" value="S1_Rrp5_repeat_hs12_sc9"/>
    <property type="match status" value="1"/>
</dbReference>
<dbReference type="CDD" id="cd05704">
    <property type="entry name" value="S1_Rrp5_repeat_hs13"/>
    <property type="match status" value="1"/>
</dbReference>
<dbReference type="CDD" id="cd05693">
    <property type="entry name" value="S1_Rrp5_repeat_hs1_sc1"/>
    <property type="match status" value="1"/>
</dbReference>
<dbReference type="CDD" id="cd05694">
    <property type="entry name" value="S1_Rrp5_repeat_hs2_sc2"/>
    <property type="match status" value="1"/>
</dbReference>
<dbReference type="CDD" id="cd05695">
    <property type="entry name" value="S1_Rrp5_repeat_hs3"/>
    <property type="match status" value="1"/>
</dbReference>
<dbReference type="CDD" id="cd05696">
    <property type="entry name" value="S1_Rrp5_repeat_hs4"/>
    <property type="match status" value="1"/>
</dbReference>
<dbReference type="CDD" id="cd05697">
    <property type="entry name" value="S1_Rrp5_repeat_hs5"/>
    <property type="match status" value="1"/>
</dbReference>
<dbReference type="CDD" id="cd05698">
    <property type="entry name" value="S1_Rrp5_repeat_hs6_sc5"/>
    <property type="match status" value="1"/>
</dbReference>
<dbReference type="CDD" id="cd04461">
    <property type="entry name" value="S1_Rrp5_repeat_hs8_sc7"/>
    <property type="match status" value="1"/>
</dbReference>
<dbReference type="FunFam" id="1.25.40.10:FF:001887">
    <property type="entry name" value="Predicted protein"/>
    <property type="match status" value="1"/>
</dbReference>
<dbReference type="FunFam" id="1.25.40.10:FF:000065">
    <property type="entry name" value="Programmed cell death 11"/>
    <property type="match status" value="1"/>
</dbReference>
<dbReference type="FunFam" id="2.40.50.140:FF:000175">
    <property type="entry name" value="Programmed cell death 11"/>
    <property type="match status" value="1"/>
</dbReference>
<dbReference type="FunFam" id="2.40.50.140:FF:000194">
    <property type="entry name" value="Programmed cell death 11"/>
    <property type="match status" value="1"/>
</dbReference>
<dbReference type="FunFam" id="2.40.50.140:FF:000200">
    <property type="entry name" value="Programmed cell death 11"/>
    <property type="match status" value="1"/>
</dbReference>
<dbReference type="FunFam" id="2.40.50.140:FF:000222">
    <property type="entry name" value="Programmed cell death 11"/>
    <property type="match status" value="1"/>
</dbReference>
<dbReference type="FunFam" id="2.40.50.140:FF:000103">
    <property type="entry name" value="protein RRP5 homolog"/>
    <property type="match status" value="2"/>
</dbReference>
<dbReference type="FunFam" id="2.40.50.140:FF:000148">
    <property type="entry name" value="protein RRP5 homolog isoform X1"/>
    <property type="match status" value="1"/>
</dbReference>
<dbReference type="FunFam" id="2.40.50.140:FF:000155">
    <property type="entry name" value="rRNA biogenesis protein RRP5"/>
    <property type="match status" value="1"/>
</dbReference>
<dbReference type="FunFam" id="2.40.50.140:FF:000340">
    <property type="entry name" value="Unplaced genomic scaffold supercont1.162, whole genome shotgun sequence"/>
    <property type="match status" value="1"/>
</dbReference>
<dbReference type="Gene3D" id="2.40.50.140">
    <property type="entry name" value="Nucleic acid-binding proteins"/>
    <property type="match status" value="9"/>
</dbReference>
<dbReference type="Gene3D" id="1.25.40.10">
    <property type="entry name" value="Tetratricopeptide repeat domain"/>
    <property type="match status" value="1"/>
</dbReference>
<dbReference type="InterPro" id="IPR003107">
    <property type="entry name" value="HAT"/>
</dbReference>
<dbReference type="InterPro" id="IPR012340">
    <property type="entry name" value="NA-bd_OB-fold"/>
</dbReference>
<dbReference type="InterPro" id="IPR045209">
    <property type="entry name" value="Rrp5"/>
</dbReference>
<dbReference type="InterPro" id="IPR048058">
    <property type="entry name" value="Rrp5_S1_rpt_hs11_sc8"/>
</dbReference>
<dbReference type="InterPro" id="IPR048059">
    <property type="entry name" value="Rrp5_S1_rpt_hs1_sc1"/>
</dbReference>
<dbReference type="InterPro" id="IPR003029">
    <property type="entry name" value="S1_domain"/>
</dbReference>
<dbReference type="InterPro" id="IPR008847">
    <property type="entry name" value="Suf"/>
</dbReference>
<dbReference type="InterPro" id="IPR011990">
    <property type="entry name" value="TPR-like_helical_dom_sf"/>
</dbReference>
<dbReference type="PANTHER" id="PTHR23270">
    <property type="entry name" value="PROGRAMMED CELL DEATH PROTEIN 11 PRE-RRNA PROCESSING PROTEIN RRP5"/>
    <property type="match status" value="1"/>
</dbReference>
<dbReference type="PANTHER" id="PTHR23270:SF10">
    <property type="entry name" value="PROTEIN RRP5 HOMOLOG"/>
    <property type="match status" value="1"/>
</dbReference>
<dbReference type="Pfam" id="PF00575">
    <property type="entry name" value="S1"/>
    <property type="match status" value="3"/>
</dbReference>
<dbReference type="Pfam" id="PF23459">
    <property type="entry name" value="S1_RRP5"/>
    <property type="match status" value="9"/>
</dbReference>
<dbReference type="Pfam" id="PF05843">
    <property type="entry name" value="Suf"/>
    <property type="match status" value="1"/>
</dbReference>
<dbReference type="SMART" id="SM00386">
    <property type="entry name" value="HAT"/>
    <property type="match status" value="7"/>
</dbReference>
<dbReference type="SMART" id="SM00316">
    <property type="entry name" value="S1"/>
    <property type="match status" value="13"/>
</dbReference>
<dbReference type="SUPFAM" id="SSF50249">
    <property type="entry name" value="Nucleic acid-binding proteins"/>
    <property type="match status" value="11"/>
</dbReference>
<dbReference type="SUPFAM" id="SSF48452">
    <property type="entry name" value="TPR-like"/>
    <property type="match status" value="2"/>
</dbReference>
<dbReference type="PROSITE" id="PS50126">
    <property type="entry name" value="S1"/>
    <property type="match status" value="12"/>
</dbReference>
<comment type="function">
    <text evidence="1">Essential for the generation of mature 18S rRNA, specifically necessary for cleavages at sites A0, 1 and 2 of the 47S precursor. Directly interacts with U3 snoRNA (By similarity).</text>
</comment>
<comment type="subunit">
    <text evidence="1">Interacts with NF-kappa-B p50/NFKB1 and NF-kappa-B p65/RELA.</text>
</comment>
<comment type="subcellular location">
    <subcellularLocation>
        <location evidence="1">Nucleus</location>
        <location evidence="1">Nucleolus</location>
    </subcellularLocation>
</comment>
<comment type="tissue specificity">
    <text evidence="5">Ubiquitous.</text>
</comment>
<comment type="sequence caution" evidence="6">
    <conflict type="miscellaneous discrepancy">
        <sequence resource="EMBL-CDS" id="AAD20941"/>
    </conflict>
    <text>The mRNA 5'- and 3'-ends do not match to the genomic DNA.</text>
</comment>
<comment type="sequence caution" evidence="6">
    <conflict type="erroneous initiation">
        <sequence resource="EMBL-CDS" id="BAB23064"/>
    </conflict>
    <text>Truncated N-terminus.</text>
</comment>
<comment type="sequence caution" evidence="6">
    <conflict type="erroneous initiation">
        <sequence resource="EMBL-CDS" id="BAC97890"/>
    </conflict>
    <text>Extended N-terminus.</text>
</comment>
<evidence type="ECO:0000250" key="1"/>
<evidence type="ECO:0000250" key="2">
    <source>
        <dbReference type="UniProtKB" id="Q14690"/>
    </source>
</evidence>
<evidence type="ECO:0000255" key="3">
    <source>
        <dbReference type="PROSITE-ProRule" id="PRU00180"/>
    </source>
</evidence>
<evidence type="ECO:0000256" key="4">
    <source>
        <dbReference type="SAM" id="MobiDB-lite"/>
    </source>
</evidence>
<evidence type="ECO:0000269" key="5">
    <source>
    </source>
</evidence>
<evidence type="ECO:0000305" key="6"/>
<evidence type="ECO:0007744" key="7">
    <source>
    </source>
</evidence>
<keyword id="KW-0007">Acetylation</keyword>
<keyword id="KW-1017">Isopeptide bond</keyword>
<keyword id="KW-0539">Nucleus</keyword>
<keyword id="KW-0597">Phosphoprotein</keyword>
<keyword id="KW-1185">Reference proteome</keyword>
<keyword id="KW-0677">Repeat</keyword>
<keyword id="KW-0698">rRNA processing</keyword>
<keyword id="KW-0832">Ubl conjugation</keyword>
<name>RRP5_MOUSE</name>
<proteinExistence type="evidence at protein level"/>
<gene>
    <name type="primary">Pdcd11</name>
    <name type="synonym">Alg4</name>
    <name type="synonym">Kiaa0185</name>
</gene>
<organism>
    <name type="scientific">Mus musculus</name>
    <name type="common">Mouse</name>
    <dbReference type="NCBI Taxonomy" id="10090"/>
    <lineage>
        <taxon>Eukaryota</taxon>
        <taxon>Metazoa</taxon>
        <taxon>Chordata</taxon>
        <taxon>Craniata</taxon>
        <taxon>Vertebrata</taxon>
        <taxon>Euteleostomi</taxon>
        <taxon>Mammalia</taxon>
        <taxon>Eutheria</taxon>
        <taxon>Euarchontoglires</taxon>
        <taxon>Glires</taxon>
        <taxon>Rodentia</taxon>
        <taxon>Myomorpha</taxon>
        <taxon>Muroidea</taxon>
        <taxon>Muridae</taxon>
        <taxon>Murinae</taxon>
        <taxon>Mus</taxon>
        <taxon>Mus</taxon>
    </lineage>
</organism>
<feature type="initiator methionine" description="Removed" evidence="2">
    <location>
        <position position="1"/>
    </location>
</feature>
<feature type="chain" id="PRO_0000364200" description="Protein RRP5 homolog">
    <location>
        <begin position="2"/>
        <end position="1862"/>
    </location>
</feature>
<feature type="domain" description="S1 motif 1" evidence="3">
    <location>
        <begin position="83"/>
        <end position="171"/>
    </location>
</feature>
<feature type="domain" description="S1 motif 2" evidence="3">
    <location>
        <begin position="187"/>
        <end position="258"/>
    </location>
</feature>
<feature type="domain" description="S1 motif 3" evidence="3">
    <location>
        <begin position="281"/>
        <end position="346"/>
    </location>
</feature>
<feature type="domain" description="S1 motif 4" evidence="3">
    <location>
        <begin position="365"/>
        <end position="436"/>
    </location>
</feature>
<feature type="domain" description="S1 motif 5" evidence="3">
    <location>
        <begin position="453"/>
        <end position="522"/>
    </location>
</feature>
<feature type="domain" description="S1 motif 6" evidence="3">
    <location>
        <begin position="542"/>
        <end position="611"/>
    </location>
</feature>
<feature type="domain" description="S1 motif 7" evidence="3">
    <location>
        <begin position="636"/>
        <end position="707"/>
    </location>
</feature>
<feature type="domain" description="S1 motif 8" evidence="3">
    <location>
        <begin position="729"/>
        <end position="798"/>
    </location>
</feature>
<feature type="domain" description="S1 motif 9" evidence="3">
    <location>
        <begin position="846"/>
        <end position="911"/>
    </location>
</feature>
<feature type="domain" description="S1 motif 10" evidence="3">
    <location>
        <begin position="1047"/>
        <end position="1120"/>
    </location>
</feature>
<feature type="domain" description="S1 motif 11" evidence="3">
    <location>
        <begin position="1160"/>
        <end position="1233"/>
    </location>
</feature>
<feature type="domain" description="S1 motif 12" evidence="3">
    <location>
        <begin position="1241"/>
        <end position="1309"/>
    </location>
</feature>
<feature type="domain" description="S1 motif 13" evidence="3">
    <location>
        <begin position="1335"/>
        <end position="1407"/>
    </location>
</feature>
<feature type="repeat" description="HAT 1">
    <location>
        <begin position="1590"/>
        <end position="1622"/>
    </location>
</feature>
<feature type="repeat" description="HAT 2">
    <location>
        <begin position="1696"/>
        <end position="1728"/>
    </location>
</feature>
<feature type="repeat" description="HAT 3">
    <location>
        <begin position="1766"/>
        <end position="1798"/>
    </location>
</feature>
<feature type="repeat" description="HAT 4">
    <location>
        <begin position="1800"/>
        <end position="1835"/>
    </location>
</feature>
<feature type="region of interest" description="Disordered" evidence="4">
    <location>
        <begin position="1"/>
        <end position="56"/>
    </location>
</feature>
<feature type="region of interest" description="Disordered" evidence="4">
    <location>
        <begin position="999"/>
        <end position="1036"/>
    </location>
</feature>
<feature type="region of interest" description="Disordered" evidence="4">
    <location>
        <begin position="1406"/>
        <end position="1520"/>
    </location>
</feature>
<feature type="region of interest" description="Disordered" evidence="4">
    <location>
        <begin position="1545"/>
        <end position="1577"/>
    </location>
</feature>
<feature type="compositionally biased region" description="Basic residues" evidence="4">
    <location>
        <begin position="43"/>
        <end position="56"/>
    </location>
</feature>
<feature type="compositionally biased region" description="Basic and acidic residues" evidence="4">
    <location>
        <begin position="1006"/>
        <end position="1019"/>
    </location>
</feature>
<feature type="compositionally biased region" description="Acidic residues" evidence="4">
    <location>
        <begin position="1020"/>
        <end position="1033"/>
    </location>
</feature>
<feature type="compositionally biased region" description="Basic and acidic residues" evidence="4">
    <location>
        <begin position="1423"/>
        <end position="1437"/>
    </location>
</feature>
<feature type="compositionally biased region" description="Basic and acidic residues" evidence="4">
    <location>
        <begin position="1445"/>
        <end position="1454"/>
    </location>
</feature>
<feature type="compositionally biased region" description="Basic and acidic residues" evidence="4">
    <location>
        <begin position="1566"/>
        <end position="1577"/>
    </location>
</feature>
<feature type="modified residue" description="N-acetylalanine" evidence="2">
    <location>
        <position position="2"/>
    </location>
</feature>
<feature type="modified residue" description="Phosphoserine" evidence="2">
    <location>
        <position position="7"/>
    </location>
</feature>
<feature type="modified residue" description="Phosphoserine" evidence="2">
    <location>
        <position position="438"/>
    </location>
</feature>
<feature type="modified residue" description="Phosphoserine" evidence="7">
    <location>
        <position position="1468"/>
    </location>
</feature>
<feature type="modified residue" description="Phosphoserine" evidence="7">
    <location>
        <position position="1490"/>
    </location>
</feature>
<feature type="cross-link" description="Glycyl lysine isopeptide (Lys-Gly) (interchain with G-Cter in SUMO2)" evidence="2">
    <location>
        <position position="1424"/>
    </location>
</feature>
<feature type="sequence conflict" description="In Ref. 3; BAE28246." evidence="6" ref="3">
    <original>E</original>
    <variation>A</variation>
    <location>
        <position position="38"/>
    </location>
</feature>
<feature type="sequence conflict" description="In Ref. 3; BAE28246." evidence="6" ref="3">
    <original>G</original>
    <variation>D</variation>
    <location>
        <position position="187"/>
    </location>
</feature>
<feature type="sequence conflict" description="In Ref. 1; BAC97890." evidence="6" ref="1">
    <original>S</original>
    <variation>P</variation>
    <location>
        <position position="531"/>
    </location>
</feature>
<feature type="sequence conflict" description="In Ref. 1; BAC97890." evidence="6" ref="1">
    <original>T</original>
    <variation>P</variation>
    <location>
        <position position="919"/>
    </location>
</feature>
<feature type="sequence conflict" description="In Ref. 1; BAC97890." evidence="6" ref="1">
    <location>
        <begin position="1027"/>
        <end position="1028"/>
    </location>
</feature>
<feature type="sequence conflict" description="In Ref. 3; BAE28246." evidence="6" ref="3">
    <original>L</original>
    <variation>H</variation>
    <location>
        <position position="1337"/>
    </location>
</feature>
<feature type="sequence conflict" description="In Ref. 2; AAH38503." evidence="6" ref="2">
    <original>ESE</original>
    <variation>TRP</variation>
    <location>
        <begin position="1469"/>
        <end position="1471"/>
    </location>
</feature>
<feature type="sequence conflict" description="In Ref. 2; AAH38503." evidence="6" ref="2">
    <original>E</original>
    <variation>Q</variation>
    <location>
        <position position="1519"/>
    </location>
</feature>
<feature type="sequence conflict" description="In Ref. 1; BAC97890 and 2; AAH38503." evidence="6" ref="1 2">
    <original>P</original>
    <variation>L</variation>
    <location>
        <position position="1556"/>
    </location>
</feature>
<feature type="sequence conflict" description="In Ref. 2; AAH70468." evidence="6" ref="2">
    <original>E</original>
    <variation>D</variation>
    <location>
        <position position="1851"/>
    </location>
</feature>
<accession>Q6NS46</accession>
<accession>Q3TSU4</accession>
<accession>Q3UGG2</accession>
<accession>Q3URK0</accession>
<accession>Q6PIA8</accession>
<accession>Q6ZQH2</accession>
<accession>Q7TPE2</accession>
<accession>Q9CTD8</accession>
<accession>Q9R1Z2</accession>
<accession>Q9WTU7</accession>
<protein>
    <recommendedName>
        <fullName>Protein RRP5 homolog</fullName>
    </recommendedName>
    <alternativeName>
        <fullName>Apoptosis-linked gene 4 protein</fullName>
    </alternativeName>
    <alternativeName>
        <fullName>Programmed cell death protein 11</fullName>
    </alternativeName>
</protein>